<organism>
    <name type="scientific">Legionella pneumophila subsp. pneumophila (strain Philadelphia 1 / ATCC 33152 / DSM 7513)</name>
    <dbReference type="NCBI Taxonomy" id="272624"/>
    <lineage>
        <taxon>Bacteria</taxon>
        <taxon>Pseudomonadati</taxon>
        <taxon>Pseudomonadota</taxon>
        <taxon>Gammaproteobacteria</taxon>
        <taxon>Legionellales</taxon>
        <taxon>Legionellaceae</taxon>
        <taxon>Legionella</taxon>
    </lineage>
</organism>
<keyword id="KW-1185">Reference proteome</keyword>
<keyword id="KW-0687">Ribonucleoprotein</keyword>
<keyword id="KW-0689">Ribosomal protein</keyword>
<accession>Q5ZYM5</accession>
<name>RL30_LEGPH</name>
<protein>
    <recommendedName>
        <fullName evidence="1">Large ribosomal subunit protein uL30</fullName>
    </recommendedName>
    <alternativeName>
        <fullName evidence="2">50S ribosomal protein L30</fullName>
    </alternativeName>
</protein>
<gene>
    <name evidence="1" type="primary">rpmD</name>
    <name type="ordered locus">lpg0347</name>
</gene>
<dbReference type="EMBL" id="AE017354">
    <property type="protein sequence ID" value="AAU26444.1"/>
    <property type="molecule type" value="Genomic_DNA"/>
</dbReference>
<dbReference type="RefSeq" id="WP_010946096.1">
    <property type="nucleotide sequence ID" value="NC_002942.5"/>
</dbReference>
<dbReference type="RefSeq" id="YP_094391.1">
    <property type="nucleotide sequence ID" value="NC_002942.5"/>
</dbReference>
<dbReference type="SMR" id="Q5ZYM5"/>
<dbReference type="STRING" id="272624.lpg0347"/>
<dbReference type="PaxDb" id="272624-lpg0347"/>
<dbReference type="GeneID" id="57034350"/>
<dbReference type="KEGG" id="lpn:lpg0347"/>
<dbReference type="PATRIC" id="fig|272624.6.peg.354"/>
<dbReference type="eggNOG" id="COG1841">
    <property type="taxonomic scope" value="Bacteria"/>
</dbReference>
<dbReference type="HOGENOM" id="CLU_131047_1_4_6"/>
<dbReference type="OrthoDB" id="9812790at2"/>
<dbReference type="Proteomes" id="UP000000609">
    <property type="component" value="Chromosome"/>
</dbReference>
<dbReference type="GO" id="GO:0022625">
    <property type="term" value="C:cytosolic large ribosomal subunit"/>
    <property type="evidence" value="ECO:0007669"/>
    <property type="project" value="TreeGrafter"/>
</dbReference>
<dbReference type="GO" id="GO:0003735">
    <property type="term" value="F:structural constituent of ribosome"/>
    <property type="evidence" value="ECO:0007669"/>
    <property type="project" value="InterPro"/>
</dbReference>
<dbReference type="GO" id="GO:0006412">
    <property type="term" value="P:translation"/>
    <property type="evidence" value="ECO:0007669"/>
    <property type="project" value="UniProtKB-UniRule"/>
</dbReference>
<dbReference type="CDD" id="cd01658">
    <property type="entry name" value="Ribosomal_L30"/>
    <property type="match status" value="1"/>
</dbReference>
<dbReference type="Gene3D" id="3.30.1390.20">
    <property type="entry name" value="Ribosomal protein L30, ferredoxin-like fold domain"/>
    <property type="match status" value="1"/>
</dbReference>
<dbReference type="HAMAP" id="MF_01371_B">
    <property type="entry name" value="Ribosomal_uL30_B"/>
    <property type="match status" value="1"/>
</dbReference>
<dbReference type="InterPro" id="IPR036919">
    <property type="entry name" value="Ribo_uL30_ferredoxin-like_sf"/>
</dbReference>
<dbReference type="InterPro" id="IPR005996">
    <property type="entry name" value="Ribosomal_uL30_bac-type"/>
</dbReference>
<dbReference type="InterPro" id="IPR016082">
    <property type="entry name" value="Ribosomal_uL30_ferredoxin-like"/>
</dbReference>
<dbReference type="NCBIfam" id="TIGR01308">
    <property type="entry name" value="rpmD_bact"/>
    <property type="match status" value="1"/>
</dbReference>
<dbReference type="PANTHER" id="PTHR15892:SF2">
    <property type="entry name" value="LARGE RIBOSOMAL SUBUNIT PROTEIN UL30M"/>
    <property type="match status" value="1"/>
</dbReference>
<dbReference type="PANTHER" id="PTHR15892">
    <property type="entry name" value="MITOCHONDRIAL RIBOSOMAL PROTEIN L30"/>
    <property type="match status" value="1"/>
</dbReference>
<dbReference type="Pfam" id="PF00327">
    <property type="entry name" value="Ribosomal_L30"/>
    <property type="match status" value="1"/>
</dbReference>
<dbReference type="PIRSF" id="PIRSF002211">
    <property type="entry name" value="Ribosomal_L30_bac-type"/>
    <property type="match status" value="1"/>
</dbReference>
<dbReference type="SUPFAM" id="SSF55129">
    <property type="entry name" value="Ribosomal protein L30p/L7e"/>
    <property type="match status" value="1"/>
</dbReference>
<comment type="subunit">
    <text evidence="1">Part of the 50S ribosomal subunit.</text>
</comment>
<comment type="similarity">
    <text evidence="1">Belongs to the universal ribosomal protein uL30 family.</text>
</comment>
<feature type="chain" id="PRO_0000273804" description="Large ribosomal subunit protein uL30">
    <location>
        <begin position="1"/>
        <end position="61"/>
    </location>
</feature>
<sequence length="61" mass="6567">MGKKIKITLVKSTIGRKPKHVAIAKQLGLGKTNSSVVHSDTPAIRGLVNEINYLLLVEESA</sequence>
<evidence type="ECO:0000255" key="1">
    <source>
        <dbReference type="HAMAP-Rule" id="MF_01371"/>
    </source>
</evidence>
<evidence type="ECO:0000305" key="2"/>
<proteinExistence type="inferred from homology"/>
<reference key="1">
    <citation type="journal article" date="2004" name="Science">
        <title>The genomic sequence of the accidental pathogen Legionella pneumophila.</title>
        <authorList>
            <person name="Chien M."/>
            <person name="Morozova I."/>
            <person name="Shi S."/>
            <person name="Sheng H."/>
            <person name="Chen J."/>
            <person name="Gomez S.M."/>
            <person name="Asamani G."/>
            <person name="Hill K."/>
            <person name="Nuara J."/>
            <person name="Feder M."/>
            <person name="Rineer J."/>
            <person name="Greenberg J.J."/>
            <person name="Steshenko V."/>
            <person name="Park S.H."/>
            <person name="Zhao B."/>
            <person name="Teplitskaya E."/>
            <person name="Edwards J.R."/>
            <person name="Pampou S."/>
            <person name="Georghiou A."/>
            <person name="Chou I.-C."/>
            <person name="Iannuccilli W."/>
            <person name="Ulz M.E."/>
            <person name="Kim D.H."/>
            <person name="Geringer-Sameth A."/>
            <person name="Goldsberry C."/>
            <person name="Morozov P."/>
            <person name="Fischer S.G."/>
            <person name="Segal G."/>
            <person name="Qu X."/>
            <person name="Rzhetsky A."/>
            <person name="Zhang P."/>
            <person name="Cayanis E."/>
            <person name="De Jong P.J."/>
            <person name="Ju J."/>
            <person name="Kalachikov S."/>
            <person name="Shuman H.A."/>
            <person name="Russo J.J."/>
        </authorList>
    </citation>
    <scope>NUCLEOTIDE SEQUENCE [LARGE SCALE GENOMIC DNA]</scope>
    <source>
        <strain>Philadelphia 1 / ATCC 33152 / DSM 7513</strain>
    </source>
</reference>